<sequence length="243" mass="25931">MKMKKLMMVALVSSTLALSGCGAMSTAIKKRNLEVKTQMSETIWLEPASERTVFLQIKNTSDKDMSGLQGKIADAVKAKGYQVVTSPDKAYYWIQANVLKADKMDLRESQGWLNRGYEGAAVGAALGAGITGYNSNSAGATLGVGLAAGLVGMAADAMVEDVNYTMITDVQIAERTKATVTTDNVAALRQGTSGAKIQTSTETGNQHKYQTRVVSNANKVNLKFEEAKPVLEDQLAKSIANIL</sequence>
<reference key="1">
    <citation type="journal article" date="1982" name="J. Bacteriol.">
        <title>Nucleotide sequence analysis of the complement resistance gene from plasmid R100.</title>
        <authorList>
            <person name="Ogata R.T."/>
            <person name="Winters C."/>
            <person name="Levine R.P."/>
        </authorList>
    </citation>
    <scope>NUCLEOTIDE SEQUENCE [GENOMIC DNA]</scope>
    <source>
        <plasmid>IncFII R100 (NR1)</plasmid>
    </source>
</reference>
<reference key="2">
    <citation type="journal article" date="1986" name="J. Bacteriol.">
        <title>Nucleotide sequence of the surface exclusion genes traS and traT from the IncF0 lac plasmid pED208.</title>
        <authorList>
            <person name="Finlay B.B."/>
            <person name="Paranchych W."/>
        </authorList>
    </citation>
    <scope>NUCLEOTIDE SEQUENCE [GENOMIC DNA]</scope>
    <source>
        <plasmid>IncFII R100 (NR1)</plasmid>
    </source>
</reference>
<reference key="3">
    <citation type="submission" date="1990-03" db="EMBL/GenBank/DDBJ databases">
        <authorList>
            <person name="O'Connor D."/>
        </authorList>
    </citation>
    <scope>NUCLEOTIDE SEQUENCE [GENOMIC DNA]</scope>
    <source>
        <plasmid>R6-5</plasmid>
    </source>
</reference>
<evidence type="ECO:0000255" key="1">
    <source>
        <dbReference type="PROSITE-ProRule" id="PRU00303"/>
    </source>
</evidence>
<evidence type="ECO:0000305" key="2"/>
<geneLocation type="plasmid">
    <name>IncFII R100</name>
    <name>NR1</name>
</geneLocation>
<geneLocation type="plasmid">
    <name>R6-5</name>
</geneLocation>
<protein>
    <recommendedName>
        <fullName>TraT complement resistance protein</fullName>
    </recommendedName>
</protein>
<name>TRAT2_ECOLX</name>
<feature type="signal peptide" evidence="1">
    <location>
        <begin position="1"/>
        <end position="20"/>
    </location>
</feature>
<feature type="chain" id="PRO_0000018205" description="TraT complement resistance protein">
    <location>
        <begin position="21"/>
        <end position="243"/>
    </location>
</feature>
<feature type="lipid moiety-binding region" description="N-palmitoyl cysteine" evidence="1">
    <location>
        <position position="21"/>
    </location>
</feature>
<feature type="lipid moiety-binding region" description="S-diacylglycerol cysteine" evidence="1">
    <location>
        <position position="21"/>
    </location>
</feature>
<keyword id="KW-0998">Cell outer membrane</keyword>
<keyword id="KW-0184">Conjugation</keyword>
<keyword id="KW-0449">Lipoprotein</keyword>
<keyword id="KW-0472">Membrane</keyword>
<keyword id="KW-0564">Palmitate</keyword>
<keyword id="KW-0614">Plasmid</keyword>
<keyword id="KW-0732">Signal</keyword>
<proteinExistence type="inferred from homology"/>
<accession>P32885</accession>
<accession>P07177</accession>
<dbReference type="EMBL" id="J01769">
    <property type="protein sequence ID" value="AAA26075.1"/>
    <property type="molecule type" value="Genomic_DNA"/>
</dbReference>
<dbReference type="EMBL" id="X52553">
    <property type="protein sequence ID" value="CAA36788.1"/>
    <property type="molecule type" value="Genomic_DNA"/>
</dbReference>
<dbReference type="PIR" id="A38901">
    <property type="entry name" value="A38901"/>
</dbReference>
<dbReference type="RefSeq" id="NP_957629.1">
    <property type="nucleotide sequence ID" value="NC_005327.1"/>
</dbReference>
<dbReference type="RefSeq" id="WP_000782451.1">
    <property type="nucleotide sequence ID" value="NZ_WVVH01000066.1"/>
</dbReference>
<dbReference type="RefSeq" id="YP_001096498.1">
    <property type="nucleotide sequence ID" value="NC_009133.1"/>
</dbReference>
<dbReference type="RefSeq" id="YP_002456219.1">
    <property type="nucleotide sequence ID" value="NC_011812.1"/>
</dbReference>
<dbReference type="RefSeq" id="YP_003162603.1">
    <property type="nucleotide sequence ID" value="NC_013175.1"/>
</dbReference>
<dbReference type="RefSeq" id="YP_006952268.1">
    <property type="nucleotide sequence ID" value="NC_019057.1"/>
</dbReference>
<dbReference type="RefSeq" id="YP_006953352.1">
    <property type="nucleotide sequence ID" value="NC_019071.1"/>
</dbReference>
<dbReference type="RefSeq" id="YP_006953450.1">
    <property type="nucleotide sequence ID" value="NC_019072.1"/>
</dbReference>
<dbReference type="RefSeq" id="YP_006953977.1">
    <property type="nucleotide sequence ID" value="NC_019090.1"/>
</dbReference>
<dbReference type="RefSeq" id="YP_006954296.1">
    <property type="nucleotide sequence ID" value="NC_019095.1"/>
</dbReference>
<dbReference type="RefSeq" id="YP_006990789.1">
    <property type="nucleotide sequence ID" value="NC_019424.1"/>
</dbReference>
<dbReference type="RefSeq" id="YP_007447575.1">
    <property type="nucleotide sequence ID" value="NC_020278.2"/>
</dbReference>
<dbReference type="SMR" id="P32885"/>
<dbReference type="OMA" id="MFEKTAY"/>
<dbReference type="GO" id="GO:0009279">
    <property type="term" value="C:cell outer membrane"/>
    <property type="evidence" value="ECO:0007669"/>
    <property type="project" value="UniProtKB-SubCell"/>
</dbReference>
<dbReference type="InterPro" id="IPR008874">
    <property type="entry name" value="TraT_complement-R"/>
</dbReference>
<dbReference type="NCBIfam" id="NF010291">
    <property type="entry name" value="PRK13731.1"/>
    <property type="match status" value="1"/>
</dbReference>
<dbReference type="Pfam" id="PF05818">
    <property type="entry name" value="TraT"/>
    <property type="match status" value="1"/>
</dbReference>
<dbReference type="PIRSF" id="PIRSF002859">
    <property type="entry name" value="Lipo_traT"/>
    <property type="match status" value="1"/>
</dbReference>
<dbReference type="PROSITE" id="PS51257">
    <property type="entry name" value="PROKAR_LIPOPROTEIN"/>
    <property type="match status" value="1"/>
</dbReference>
<comment type="function">
    <text>Responsible for preventing unproductive conjugation between bacteria carrying like plasmids.</text>
</comment>
<comment type="subcellular location">
    <subcellularLocation>
        <location>Cell outer membrane</location>
        <topology>Lipid-anchor</topology>
    </subcellularLocation>
</comment>
<comment type="similarity">
    <text evidence="2">Belongs to the TraT lipoprotein family.</text>
</comment>
<gene>
    <name type="primary">traT</name>
</gene>
<organism>
    <name type="scientific">Escherichia coli</name>
    <dbReference type="NCBI Taxonomy" id="562"/>
    <lineage>
        <taxon>Bacteria</taxon>
        <taxon>Pseudomonadati</taxon>
        <taxon>Pseudomonadota</taxon>
        <taxon>Gammaproteobacteria</taxon>
        <taxon>Enterobacterales</taxon>
        <taxon>Enterobacteriaceae</taxon>
        <taxon>Escherichia</taxon>
    </lineage>
</organism>